<protein>
    <recommendedName>
        <fullName evidence="1">UvrABC system protein B</fullName>
        <shortName evidence="1">Protein UvrB</shortName>
    </recommendedName>
    <alternativeName>
        <fullName evidence="1">Excinuclease ABC subunit B</fullName>
    </alternativeName>
</protein>
<organism>
    <name type="scientific">Nitratidesulfovibrio vulgaris (strain ATCC 29579 / DSM 644 / CCUG 34227 / NCIMB 8303 / VKM B-1760 / Hildenborough)</name>
    <name type="common">Desulfovibrio vulgaris</name>
    <dbReference type="NCBI Taxonomy" id="882"/>
    <lineage>
        <taxon>Bacteria</taxon>
        <taxon>Pseudomonadati</taxon>
        <taxon>Thermodesulfobacteriota</taxon>
        <taxon>Desulfovibrionia</taxon>
        <taxon>Desulfovibrionales</taxon>
        <taxon>Desulfovibrionaceae</taxon>
        <taxon>Nitratidesulfovibrio</taxon>
    </lineage>
</organism>
<proteinExistence type="inferred from homology"/>
<sequence length="677" mass="76056">MADTCFRLHTEFEPTGDQPEAIGQIVANLGHGVRDQVLLGVTGSGKTFTVANVIAACNRPALILAPNKTLAAQLYNEFRALFPDNAVEYFVSYYDYYQPEAYVPASDTYIEKDSSINDNIDKLRHAATHALLTRRDVVIVASVSCIYGLGSPEYYARLVIPVECGQRFSMDALMTRLVEVQYQRNDFDFHRGTFRVRGDVLEVIPAYHHERALRIEFFGDDIDAISEIDPLTGEVLGSVGKTVIYPASHYVSDRDNLVRAMSDIRDELGERLREYQSANRLVEAQRLEQRTMLDLEMMEELGYCNGIENYSRHLDGRAAGQPPSCLLDYFPDDFLLFVDESHITVPQVGAMYKGDRSRKSTLVDFGFRLPSALDNRPLEFAEFLTRINQTVYVSATPGKWELDRSQGVIAEQIIRPTGLVDPVVEVRPTRGQVDDLLAECRARAARDERVLITTLTKRMAEDLTEHLGNMGLSVRYLHSDIDTMERMAIIQALRRGECDVLVGINLLREGLDIPEVSLVSILDADKEGFLRSTGSLIQTFGRAARNAAGRVILYADTVTASMRAAMDETARRRERQQAWNEANGIEPRTIRKSLDTPFDAIYSAASEGGKGKGRGRGRQAAPAVENVAEYGTSPEDMAKHIQKLEREMREAAKELEFERAATLRDRIRLLRERLIEA</sequence>
<accession>Q72BN0</accession>
<dbReference type="EMBL" id="AE017285">
    <property type="protein sequence ID" value="AAS96083.1"/>
    <property type="molecule type" value="Genomic_DNA"/>
</dbReference>
<dbReference type="RefSeq" id="WP_010938896.1">
    <property type="nucleotide sequence ID" value="NC_002937.3"/>
</dbReference>
<dbReference type="RefSeq" id="YP_010824.1">
    <property type="nucleotide sequence ID" value="NC_002937.3"/>
</dbReference>
<dbReference type="SMR" id="Q72BN0"/>
<dbReference type="STRING" id="882.DVU_1605"/>
<dbReference type="PaxDb" id="882-DVU_1605"/>
<dbReference type="EnsemblBacteria" id="AAS96083">
    <property type="protein sequence ID" value="AAS96083"/>
    <property type="gene ID" value="DVU_1605"/>
</dbReference>
<dbReference type="KEGG" id="dvu:DVU_1605"/>
<dbReference type="PATRIC" id="fig|882.5.peg.1480"/>
<dbReference type="eggNOG" id="COG0556">
    <property type="taxonomic scope" value="Bacteria"/>
</dbReference>
<dbReference type="HOGENOM" id="CLU_009621_2_1_7"/>
<dbReference type="OrthoDB" id="9806651at2"/>
<dbReference type="PhylomeDB" id="Q72BN0"/>
<dbReference type="Proteomes" id="UP000002194">
    <property type="component" value="Chromosome"/>
</dbReference>
<dbReference type="GO" id="GO:0005737">
    <property type="term" value="C:cytoplasm"/>
    <property type="evidence" value="ECO:0007669"/>
    <property type="project" value="UniProtKB-SubCell"/>
</dbReference>
<dbReference type="GO" id="GO:0009380">
    <property type="term" value="C:excinuclease repair complex"/>
    <property type="evidence" value="ECO:0007669"/>
    <property type="project" value="InterPro"/>
</dbReference>
<dbReference type="GO" id="GO:0005524">
    <property type="term" value="F:ATP binding"/>
    <property type="evidence" value="ECO:0007669"/>
    <property type="project" value="UniProtKB-UniRule"/>
</dbReference>
<dbReference type="GO" id="GO:0016887">
    <property type="term" value="F:ATP hydrolysis activity"/>
    <property type="evidence" value="ECO:0007669"/>
    <property type="project" value="InterPro"/>
</dbReference>
<dbReference type="GO" id="GO:0003677">
    <property type="term" value="F:DNA binding"/>
    <property type="evidence" value="ECO:0007669"/>
    <property type="project" value="UniProtKB-UniRule"/>
</dbReference>
<dbReference type="GO" id="GO:0009381">
    <property type="term" value="F:excinuclease ABC activity"/>
    <property type="evidence" value="ECO:0007669"/>
    <property type="project" value="UniProtKB-UniRule"/>
</dbReference>
<dbReference type="GO" id="GO:0006289">
    <property type="term" value="P:nucleotide-excision repair"/>
    <property type="evidence" value="ECO:0007669"/>
    <property type="project" value="UniProtKB-UniRule"/>
</dbReference>
<dbReference type="GO" id="GO:0009432">
    <property type="term" value="P:SOS response"/>
    <property type="evidence" value="ECO:0007669"/>
    <property type="project" value="UniProtKB-UniRule"/>
</dbReference>
<dbReference type="CDD" id="cd17916">
    <property type="entry name" value="DEXHc_UvrB"/>
    <property type="match status" value="1"/>
</dbReference>
<dbReference type="CDD" id="cd18790">
    <property type="entry name" value="SF2_C_UvrB"/>
    <property type="match status" value="1"/>
</dbReference>
<dbReference type="Gene3D" id="3.40.50.300">
    <property type="entry name" value="P-loop containing nucleotide triphosphate hydrolases"/>
    <property type="match status" value="3"/>
</dbReference>
<dbReference type="Gene3D" id="4.10.860.10">
    <property type="entry name" value="UVR domain"/>
    <property type="match status" value="1"/>
</dbReference>
<dbReference type="HAMAP" id="MF_00204">
    <property type="entry name" value="UvrB"/>
    <property type="match status" value="1"/>
</dbReference>
<dbReference type="InterPro" id="IPR006935">
    <property type="entry name" value="Helicase/UvrB_N"/>
</dbReference>
<dbReference type="InterPro" id="IPR014001">
    <property type="entry name" value="Helicase_ATP-bd"/>
</dbReference>
<dbReference type="InterPro" id="IPR001650">
    <property type="entry name" value="Helicase_C-like"/>
</dbReference>
<dbReference type="InterPro" id="IPR027417">
    <property type="entry name" value="P-loop_NTPase"/>
</dbReference>
<dbReference type="InterPro" id="IPR001943">
    <property type="entry name" value="UVR_dom"/>
</dbReference>
<dbReference type="InterPro" id="IPR036876">
    <property type="entry name" value="UVR_dom_sf"/>
</dbReference>
<dbReference type="InterPro" id="IPR004807">
    <property type="entry name" value="UvrB"/>
</dbReference>
<dbReference type="InterPro" id="IPR041471">
    <property type="entry name" value="UvrB_inter"/>
</dbReference>
<dbReference type="InterPro" id="IPR024759">
    <property type="entry name" value="UvrB_YAD/RRR_dom"/>
</dbReference>
<dbReference type="NCBIfam" id="NF003673">
    <property type="entry name" value="PRK05298.1"/>
    <property type="match status" value="1"/>
</dbReference>
<dbReference type="NCBIfam" id="TIGR00631">
    <property type="entry name" value="uvrb"/>
    <property type="match status" value="1"/>
</dbReference>
<dbReference type="PANTHER" id="PTHR24029">
    <property type="entry name" value="UVRABC SYSTEM PROTEIN B"/>
    <property type="match status" value="1"/>
</dbReference>
<dbReference type="PANTHER" id="PTHR24029:SF0">
    <property type="entry name" value="UVRABC SYSTEM PROTEIN B"/>
    <property type="match status" value="1"/>
</dbReference>
<dbReference type="Pfam" id="PF00271">
    <property type="entry name" value="Helicase_C"/>
    <property type="match status" value="1"/>
</dbReference>
<dbReference type="Pfam" id="PF04851">
    <property type="entry name" value="ResIII"/>
    <property type="match status" value="1"/>
</dbReference>
<dbReference type="Pfam" id="PF02151">
    <property type="entry name" value="UVR"/>
    <property type="match status" value="1"/>
</dbReference>
<dbReference type="Pfam" id="PF12344">
    <property type="entry name" value="UvrB"/>
    <property type="match status" value="1"/>
</dbReference>
<dbReference type="Pfam" id="PF17757">
    <property type="entry name" value="UvrB_inter"/>
    <property type="match status" value="1"/>
</dbReference>
<dbReference type="SMART" id="SM00487">
    <property type="entry name" value="DEXDc"/>
    <property type="match status" value="1"/>
</dbReference>
<dbReference type="SMART" id="SM00490">
    <property type="entry name" value="HELICc"/>
    <property type="match status" value="1"/>
</dbReference>
<dbReference type="SUPFAM" id="SSF46600">
    <property type="entry name" value="C-terminal UvrC-binding domain of UvrB"/>
    <property type="match status" value="1"/>
</dbReference>
<dbReference type="SUPFAM" id="SSF52540">
    <property type="entry name" value="P-loop containing nucleoside triphosphate hydrolases"/>
    <property type="match status" value="2"/>
</dbReference>
<dbReference type="PROSITE" id="PS51192">
    <property type="entry name" value="HELICASE_ATP_BIND_1"/>
    <property type="match status" value="1"/>
</dbReference>
<dbReference type="PROSITE" id="PS51194">
    <property type="entry name" value="HELICASE_CTER"/>
    <property type="match status" value="1"/>
</dbReference>
<dbReference type="PROSITE" id="PS50151">
    <property type="entry name" value="UVR"/>
    <property type="match status" value="1"/>
</dbReference>
<gene>
    <name evidence="1" type="primary">uvrB</name>
    <name type="ordered locus">DVU_1605</name>
</gene>
<comment type="function">
    <text evidence="1">The UvrABC repair system catalyzes the recognition and processing of DNA lesions. A damage recognition complex composed of 2 UvrA and 2 UvrB subunits scans DNA for abnormalities. Upon binding of the UvrA(2)B(2) complex to a putative damaged site, the DNA wraps around one UvrB monomer. DNA wrap is dependent on ATP binding by UvrB and probably causes local melting of the DNA helix, facilitating insertion of UvrB beta-hairpin between the DNA strands. Then UvrB probes one DNA strand for the presence of a lesion. If a lesion is found the UvrA subunits dissociate and the UvrB-DNA preincision complex is formed. This complex is subsequently bound by UvrC and the second UvrB is released. If no lesion is found, the DNA wraps around the other UvrB subunit that will check the other stand for damage.</text>
</comment>
<comment type="subunit">
    <text evidence="1">Forms a heterotetramer with UvrA during the search for lesions. Interacts with UvrC in an incision complex.</text>
</comment>
<comment type="subcellular location">
    <subcellularLocation>
        <location evidence="1">Cytoplasm</location>
    </subcellularLocation>
</comment>
<comment type="domain">
    <text evidence="1">The beta-hairpin motif is involved in DNA binding.</text>
</comment>
<comment type="similarity">
    <text evidence="1">Belongs to the UvrB family.</text>
</comment>
<reference key="1">
    <citation type="journal article" date="2004" name="Nat. Biotechnol.">
        <title>The genome sequence of the anaerobic, sulfate-reducing bacterium Desulfovibrio vulgaris Hildenborough.</title>
        <authorList>
            <person name="Heidelberg J.F."/>
            <person name="Seshadri R."/>
            <person name="Haveman S.A."/>
            <person name="Hemme C.L."/>
            <person name="Paulsen I.T."/>
            <person name="Kolonay J.F."/>
            <person name="Eisen J.A."/>
            <person name="Ward N.L."/>
            <person name="Methe B.A."/>
            <person name="Brinkac L.M."/>
            <person name="Daugherty S.C."/>
            <person name="DeBoy R.T."/>
            <person name="Dodson R.J."/>
            <person name="Durkin A.S."/>
            <person name="Madupu R."/>
            <person name="Nelson W.C."/>
            <person name="Sullivan S.A."/>
            <person name="Fouts D.E."/>
            <person name="Haft D.H."/>
            <person name="Selengut J."/>
            <person name="Peterson J.D."/>
            <person name="Davidsen T.M."/>
            <person name="Zafar N."/>
            <person name="Zhou L."/>
            <person name="Radune D."/>
            <person name="Dimitrov G."/>
            <person name="Hance M."/>
            <person name="Tran K."/>
            <person name="Khouri H.M."/>
            <person name="Gill J."/>
            <person name="Utterback T.R."/>
            <person name="Feldblyum T.V."/>
            <person name="Wall J.D."/>
            <person name="Voordouw G."/>
            <person name="Fraser C.M."/>
        </authorList>
    </citation>
    <scope>NUCLEOTIDE SEQUENCE [LARGE SCALE GENOMIC DNA]</scope>
    <source>
        <strain>ATCC 29579 / DSM 644 / CCUG 34227 / NCIMB 8303 / VKM B-1760 / Hildenborough</strain>
    </source>
</reference>
<feature type="chain" id="PRO_0000227311" description="UvrABC system protein B">
    <location>
        <begin position="1"/>
        <end position="677"/>
    </location>
</feature>
<feature type="domain" description="Helicase ATP-binding" evidence="1">
    <location>
        <begin position="27"/>
        <end position="414"/>
    </location>
</feature>
<feature type="domain" description="Helicase C-terminal" evidence="1">
    <location>
        <begin position="432"/>
        <end position="594"/>
    </location>
</feature>
<feature type="domain" description="UVR" evidence="1">
    <location>
        <begin position="638"/>
        <end position="673"/>
    </location>
</feature>
<feature type="short sequence motif" description="Beta-hairpin">
    <location>
        <begin position="93"/>
        <end position="116"/>
    </location>
</feature>
<feature type="binding site" evidence="1">
    <location>
        <begin position="40"/>
        <end position="47"/>
    </location>
    <ligand>
        <name>ATP</name>
        <dbReference type="ChEBI" id="CHEBI:30616"/>
    </ligand>
</feature>
<name>UVRB_NITV2</name>
<keyword id="KW-0067">ATP-binding</keyword>
<keyword id="KW-0963">Cytoplasm</keyword>
<keyword id="KW-0227">DNA damage</keyword>
<keyword id="KW-0228">DNA excision</keyword>
<keyword id="KW-0234">DNA repair</keyword>
<keyword id="KW-0267">Excision nuclease</keyword>
<keyword id="KW-0547">Nucleotide-binding</keyword>
<keyword id="KW-1185">Reference proteome</keyword>
<keyword id="KW-0742">SOS response</keyword>
<evidence type="ECO:0000255" key="1">
    <source>
        <dbReference type="HAMAP-Rule" id="MF_00204"/>
    </source>
</evidence>